<accession>B4TXF0</accession>
<organism>
    <name type="scientific">Salmonella schwarzengrund (strain CVM19633)</name>
    <dbReference type="NCBI Taxonomy" id="439843"/>
    <lineage>
        <taxon>Bacteria</taxon>
        <taxon>Pseudomonadati</taxon>
        <taxon>Pseudomonadota</taxon>
        <taxon>Gammaproteobacteria</taxon>
        <taxon>Enterobacterales</taxon>
        <taxon>Enterobacteriaceae</taxon>
        <taxon>Salmonella</taxon>
    </lineage>
</organism>
<proteinExistence type="inferred from homology"/>
<sequence>MATVNQLVRKPRARKVAKSNVPALEACPQKRGVCTRVYTTTPKKPNSALRKVCRVRLTNGFEVTSYIGGEGHNLQEHSVILIRGGRVKDLPGVRYHTVRGALDCSGVKDRKQARSKYGVKRPKA</sequence>
<keyword id="KW-0488">Methylation</keyword>
<keyword id="KW-0687">Ribonucleoprotein</keyword>
<keyword id="KW-0689">Ribosomal protein</keyword>
<keyword id="KW-0694">RNA-binding</keyword>
<keyword id="KW-0699">rRNA-binding</keyword>
<keyword id="KW-0820">tRNA-binding</keyword>
<dbReference type="EMBL" id="CP001127">
    <property type="protein sequence ID" value="ACF89073.1"/>
    <property type="molecule type" value="Genomic_DNA"/>
</dbReference>
<dbReference type="RefSeq" id="WP_000246815.1">
    <property type="nucleotide sequence ID" value="NC_011094.1"/>
</dbReference>
<dbReference type="SMR" id="B4TXF0"/>
<dbReference type="GeneID" id="98390450"/>
<dbReference type="KEGG" id="sew:SeSA_A3644"/>
<dbReference type="HOGENOM" id="CLU_104295_1_2_6"/>
<dbReference type="Proteomes" id="UP000001865">
    <property type="component" value="Chromosome"/>
</dbReference>
<dbReference type="GO" id="GO:0015935">
    <property type="term" value="C:small ribosomal subunit"/>
    <property type="evidence" value="ECO:0007669"/>
    <property type="project" value="InterPro"/>
</dbReference>
<dbReference type="GO" id="GO:0019843">
    <property type="term" value="F:rRNA binding"/>
    <property type="evidence" value="ECO:0007669"/>
    <property type="project" value="UniProtKB-UniRule"/>
</dbReference>
<dbReference type="GO" id="GO:0003735">
    <property type="term" value="F:structural constituent of ribosome"/>
    <property type="evidence" value="ECO:0007669"/>
    <property type="project" value="InterPro"/>
</dbReference>
<dbReference type="GO" id="GO:0000049">
    <property type="term" value="F:tRNA binding"/>
    <property type="evidence" value="ECO:0007669"/>
    <property type="project" value="UniProtKB-UniRule"/>
</dbReference>
<dbReference type="GO" id="GO:0006412">
    <property type="term" value="P:translation"/>
    <property type="evidence" value="ECO:0007669"/>
    <property type="project" value="UniProtKB-UniRule"/>
</dbReference>
<dbReference type="CDD" id="cd03368">
    <property type="entry name" value="Ribosomal_S12"/>
    <property type="match status" value="1"/>
</dbReference>
<dbReference type="FunFam" id="2.40.50.140:FF:000001">
    <property type="entry name" value="30S ribosomal protein S12"/>
    <property type="match status" value="1"/>
</dbReference>
<dbReference type="Gene3D" id="2.40.50.140">
    <property type="entry name" value="Nucleic acid-binding proteins"/>
    <property type="match status" value="1"/>
</dbReference>
<dbReference type="HAMAP" id="MF_00403_B">
    <property type="entry name" value="Ribosomal_uS12_B"/>
    <property type="match status" value="1"/>
</dbReference>
<dbReference type="InterPro" id="IPR012340">
    <property type="entry name" value="NA-bd_OB-fold"/>
</dbReference>
<dbReference type="InterPro" id="IPR006032">
    <property type="entry name" value="Ribosomal_uS12"/>
</dbReference>
<dbReference type="InterPro" id="IPR005679">
    <property type="entry name" value="Ribosomal_uS12_bac"/>
</dbReference>
<dbReference type="NCBIfam" id="TIGR00981">
    <property type="entry name" value="rpsL_bact"/>
    <property type="match status" value="1"/>
</dbReference>
<dbReference type="PANTHER" id="PTHR11652">
    <property type="entry name" value="30S RIBOSOMAL PROTEIN S12 FAMILY MEMBER"/>
    <property type="match status" value="1"/>
</dbReference>
<dbReference type="Pfam" id="PF00164">
    <property type="entry name" value="Ribosom_S12_S23"/>
    <property type="match status" value="1"/>
</dbReference>
<dbReference type="PIRSF" id="PIRSF002133">
    <property type="entry name" value="Ribosomal_S12/S23"/>
    <property type="match status" value="1"/>
</dbReference>
<dbReference type="PRINTS" id="PR01034">
    <property type="entry name" value="RIBOSOMALS12"/>
</dbReference>
<dbReference type="SUPFAM" id="SSF50249">
    <property type="entry name" value="Nucleic acid-binding proteins"/>
    <property type="match status" value="1"/>
</dbReference>
<dbReference type="PROSITE" id="PS00055">
    <property type="entry name" value="RIBOSOMAL_S12"/>
    <property type="match status" value="1"/>
</dbReference>
<evidence type="ECO:0000250" key="1"/>
<evidence type="ECO:0000255" key="2">
    <source>
        <dbReference type="HAMAP-Rule" id="MF_00403"/>
    </source>
</evidence>
<evidence type="ECO:0000305" key="3"/>
<gene>
    <name evidence="2" type="primary">rpsL</name>
    <name type="ordered locus">SeSA_A3644</name>
</gene>
<name>RS12_SALSV</name>
<reference key="1">
    <citation type="journal article" date="2011" name="J. Bacteriol.">
        <title>Comparative genomics of 28 Salmonella enterica isolates: evidence for CRISPR-mediated adaptive sublineage evolution.</title>
        <authorList>
            <person name="Fricke W.F."/>
            <person name="Mammel M.K."/>
            <person name="McDermott P.F."/>
            <person name="Tartera C."/>
            <person name="White D.G."/>
            <person name="Leclerc J.E."/>
            <person name="Ravel J."/>
            <person name="Cebula T.A."/>
        </authorList>
    </citation>
    <scope>NUCLEOTIDE SEQUENCE [LARGE SCALE GENOMIC DNA]</scope>
    <source>
        <strain>CVM19633</strain>
    </source>
</reference>
<protein>
    <recommendedName>
        <fullName evidence="2">Small ribosomal subunit protein uS12</fullName>
    </recommendedName>
    <alternativeName>
        <fullName evidence="3">30S ribosomal protein S12</fullName>
    </alternativeName>
</protein>
<feature type="chain" id="PRO_1000123516" description="Small ribosomal subunit protein uS12">
    <location>
        <begin position="1"/>
        <end position="124"/>
    </location>
</feature>
<feature type="modified residue" description="3-methylthioaspartic acid" evidence="1">
    <location>
        <position position="89"/>
    </location>
</feature>
<comment type="function">
    <text evidence="2">With S4 and S5 plays an important role in translational accuracy.</text>
</comment>
<comment type="function">
    <text evidence="2">Interacts with and stabilizes bases of the 16S rRNA that are involved in tRNA selection in the A site and with the mRNA backbone. Located at the interface of the 30S and 50S subunits, it traverses the body of the 30S subunit contacting proteins on the other side and probably holding the rRNA structure together. The combined cluster of proteins S8, S12 and S17 appears to hold together the shoulder and platform of the 30S subunit.</text>
</comment>
<comment type="subunit">
    <text evidence="2">Part of the 30S ribosomal subunit. Contacts proteins S8 and S17. May interact with IF1 in the 30S initiation complex.</text>
</comment>
<comment type="similarity">
    <text evidence="2">Belongs to the universal ribosomal protein uS12 family.</text>
</comment>